<reference key="1">
    <citation type="journal article" date="1989" name="Nucleic Acids Res.">
        <title>Characterization of a putative transcription factor gene expressed in the 20-OH-ecdysone inducible puff 74EF in Drosophila melanogaster.</title>
        <authorList>
            <person name="Janknecht R."/>
            <person name="Taube W."/>
            <person name="Luedecke H.-J."/>
            <person name="Pongs O."/>
        </authorList>
    </citation>
    <scope>NUCLEOTIDE SEQUENCE [GENOMIC DNA]</scope>
</reference>
<reference key="2">
    <citation type="journal article" date="1990" name="Cell">
        <title>The Drosophila 74EF early puff contains E74, a complex ecdysone-inducible gene that encodes two ets-related proteins.</title>
        <authorList>
            <person name="Burtis K.C."/>
            <person name="Thummel C.S."/>
            <person name="Jones C.W."/>
            <person name="Karim F.D."/>
            <person name="Hogness D.S."/>
        </authorList>
    </citation>
    <scope>NUCLEOTIDE SEQUENCE [MRNA] (ISOFORM B)</scope>
    <scope>ALTERNATIVE SPLICING</scope>
    <source>
        <strain>Canton-S</strain>
    </source>
</reference>
<reference key="3">
    <citation type="journal article" date="2000" name="Science">
        <title>The genome sequence of Drosophila melanogaster.</title>
        <authorList>
            <person name="Adams M.D."/>
            <person name="Celniker S.E."/>
            <person name="Holt R.A."/>
            <person name="Evans C.A."/>
            <person name="Gocayne J.D."/>
            <person name="Amanatides P.G."/>
            <person name="Scherer S.E."/>
            <person name="Li P.W."/>
            <person name="Hoskins R.A."/>
            <person name="Galle R.F."/>
            <person name="George R.A."/>
            <person name="Lewis S.E."/>
            <person name="Richards S."/>
            <person name="Ashburner M."/>
            <person name="Henderson S.N."/>
            <person name="Sutton G.G."/>
            <person name="Wortman J.R."/>
            <person name="Yandell M.D."/>
            <person name="Zhang Q."/>
            <person name="Chen L.X."/>
            <person name="Brandon R.C."/>
            <person name="Rogers Y.-H.C."/>
            <person name="Blazej R.G."/>
            <person name="Champe M."/>
            <person name="Pfeiffer B.D."/>
            <person name="Wan K.H."/>
            <person name="Doyle C."/>
            <person name="Baxter E.G."/>
            <person name="Helt G."/>
            <person name="Nelson C.R."/>
            <person name="Miklos G.L.G."/>
            <person name="Abril J.F."/>
            <person name="Agbayani A."/>
            <person name="An H.-J."/>
            <person name="Andrews-Pfannkoch C."/>
            <person name="Baldwin D."/>
            <person name="Ballew R.M."/>
            <person name="Basu A."/>
            <person name="Baxendale J."/>
            <person name="Bayraktaroglu L."/>
            <person name="Beasley E.M."/>
            <person name="Beeson K.Y."/>
            <person name="Benos P.V."/>
            <person name="Berman B.P."/>
            <person name="Bhandari D."/>
            <person name="Bolshakov S."/>
            <person name="Borkova D."/>
            <person name="Botchan M.R."/>
            <person name="Bouck J."/>
            <person name="Brokstein P."/>
            <person name="Brottier P."/>
            <person name="Burtis K.C."/>
            <person name="Busam D.A."/>
            <person name="Butler H."/>
            <person name="Cadieu E."/>
            <person name="Center A."/>
            <person name="Chandra I."/>
            <person name="Cherry J.M."/>
            <person name="Cawley S."/>
            <person name="Dahlke C."/>
            <person name="Davenport L.B."/>
            <person name="Davies P."/>
            <person name="de Pablos B."/>
            <person name="Delcher A."/>
            <person name="Deng Z."/>
            <person name="Mays A.D."/>
            <person name="Dew I."/>
            <person name="Dietz S.M."/>
            <person name="Dodson K."/>
            <person name="Doup L.E."/>
            <person name="Downes M."/>
            <person name="Dugan-Rocha S."/>
            <person name="Dunkov B.C."/>
            <person name="Dunn P."/>
            <person name="Durbin K.J."/>
            <person name="Evangelista C.C."/>
            <person name="Ferraz C."/>
            <person name="Ferriera S."/>
            <person name="Fleischmann W."/>
            <person name="Fosler C."/>
            <person name="Gabrielian A.E."/>
            <person name="Garg N.S."/>
            <person name="Gelbart W.M."/>
            <person name="Glasser K."/>
            <person name="Glodek A."/>
            <person name="Gong F."/>
            <person name="Gorrell J.H."/>
            <person name="Gu Z."/>
            <person name="Guan P."/>
            <person name="Harris M."/>
            <person name="Harris N.L."/>
            <person name="Harvey D.A."/>
            <person name="Heiman T.J."/>
            <person name="Hernandez J.R."/>
            <person name="Houck J."/>
            <person name="Hostin D."/>
            <person name="Houston K.A."/>
            <person name="Howland T.J."/>
            <person name="Wei M.-H."/>
            <person name="Ibegwam C."/>
            <person name="Jalali M."/>
            <person name="Kalush F."/>
            <person name="Karpen G.H."/>
            <person name="Ke Z."/>
            <person name="Kennison J.A."/>
            <person name="Ketchum K.A."/>
            <person name="Kimmel B.E."/>
            <person name="Kodira C.D."/>
            <person name="Kraft C.L."/>
            <person name="Kravitz S."/>
            <person name="Kulp D."/>
            <person name="Lai Z."/>
            <person name="Lasko P."/>
            <person name="Lei Y."/>
            <person name="Levitsky A.A."/>
            <person name="Li J.H."/>
            <person name="Li Z."/>
            <person name="Liang Y."/>
            <person name="Lin X."/>
            <person name="Liu X."/>
            <person name="Mattei B."/>
            <person name="McIntosh T.C."/>
            <person name="McLeod M.P."/>
            <person name="McPherson D."/>
            <person name="Merkulov G."/>
            <person name="Milshina N.V."/>
            <person name="Mobarry C."/>
            <person name="Morris J."/>
            <person name="Moshrefi A."/>
            <person name="Mount S.M."/>
            <person name="Moy M."/>
            <person name="Murphy B."/>
            <person name="Murphy L."/>
            <person name="Muzny D.M."/>
            <person name="Nelson D.L."/>
            <person name="Nelson D.R."/>
            <person name="Nelson K.A."/>
            <person name="Nixon K."/>
            <person name="Nusskern D.R."/>
            <person name="Pacleb J.M."/>
            <person name="Palazzolo M."/>
            <person name="Pittman G.S."/>
            <person name="Pan S."/>
            <person name="Pollard J."/>
            <person name="Puri V."/>
            <person name="Reese M.G."/>
            <person name="Reinert K."/>
            <person name="Remington K."/>
            <person name="Saunders R.D.C."/>
            <person name="Scheeler F."/>
            <person name="Shen H."/>
            <person name="Shue B.C."/>
            <person name="Siden-Kiamos I."/>
            <person name="Simpson M."/>
            <person name="Skupski M.P."/>
            <person name="Smith T.J."/>
            <person name="Spier E."/>
            <person name="Spradling A.C."/>
            <person name="Stapleton M."/>
            <person name="Strong R."/>
            <person name="Sun E."/>
            <person name="Svirskas R."/>
            <person name="Tector C."/>
            <person name="Turner R."/>
            <person name="Venter E."/>
            <person name="Wang A.H."/>
            <person name="Wang X."/>
            <person name="Wang Z.-Y."/>
            <person name="Wassarman D.A."/>
            <person name="Weinstock G.M."/>
            <person name="Weissenbach J."/>
            <person name="Williams S.M."/>
            <person name="Woodage T."/>
            <person name="Worley K.C."/>
            <person name="Wu D."/>
            <person name="Yang S."/>
            <person name="Yao Q.A."/>
            <person name="Ye J."/>
            <person name="Yeh R.-F."/>
            <person name="Zaveri J.S."/>
            <person name="Zhan M."/>
            <person name="Zhang G."/>
            <person name="Zhao Q."/>
            <person name="Zheng L."/>
            <person name="Zheng X.H."/>
            <person name="Zhong F.N."/>
            <person name="Zhong W."/>
            <person name="Zhou X."/>
            <person name="Zhu S.C."/>
            <person name="Zhu X."/>
            <person name="Smith H.O."/>
            <person name="Gibbs R.A."/>
            <person name="Myers E.W."/>
            <person name="Rubin G.M."/>
            <person name="Venter J.C."/>
        </authorList>
    </citation>
    <scope>NUCLEOTIDE SEQUENCE [LARGE SCALE GENOMIC DNA]</scope>
    <source>
        <strain>Berkeley</strain>
    </source>
</reference>
<reference key="4">
    <citation type="journal article" date="2002" name="Genome Biol.">
        <title>Annotation of the Drosophila melanogaster euchromatic genome: a systematic review.</title>
        <authorList>
            <person name="Misra S."/>
            <person name="Crosby M.A."/>
            <person name="Mungall C.J."/>
            <person name="Matthews B.B."/>
            <person name="Campbell K.S."/>
            <person name="Hradecky P."/>
            <person name="Huang Y."/>
            <person name="Kaminker J.S."/>
            <person name="Millburn G.H."/>
            <person name="Prochnik S.E."/>
            <person name="Smith C.D."/>
            <person name="Tupy J.L."/>
            <person name="Whitfield E.J."/>
            <person name="Bayraktaroglu L."/>
            <person name="Berman B.P."/>
            <person name="Bettencourt B.R."/>
            <person name="Celniker S.E."/>
            <person name="de Grey A.D.N.J."/>
            <person name="Drysdale R.A."/>
            <person name="Harris N.L."/>
            <person name="Richter J."/>
            <person name="Russo S."/>
            <person name="Schroeder A.J."/>
            <person name="Shu S.Q."/>
            <person name="Stapleton M."/>
            <person name="Yamada C."/>
            <person name="Ashburner M."/>
            <person name="Gelbart W.M."/>
            <person name="Rubin G.M."/>
            <person name="Lewis S.E."/>
        </authorList>
    </citation>
    <scope>GENOME REANNOTATION</scope>
    <scope>ALTERNATIVE SPLICING</scope>
    <source>
        <strain>Berkeley</strain>
    </source>
</reference>
<reference key="5">
    <citation type="submission" date="2003-02" db="EMBL/GenBank/DDBJ databases">
        <authorList>
            <person name="Stapleton M."/>
            <person name="Brokstein P."/>
            <person name="Hong L."/>
            <person name="Agbayani A."/>
            <person name="Carlson J.W."/>
            <person name="Champe M."/>
            <person name="Chavez C."/>
            <person name="Dorsett V."/>
            <person name="Dresnek D."/>
            <person name="Farfan D."/>
            <person name="Frise E."/>
            <person name="George R.A."/>
            <person name="Gonzalez M."/>
            <person name="Guarin H."/>
            <person name="Kronmiller B."/>
            <person name="Li P.W."/>
            <person name="Liao G."/>
            <person name="Miranda A."/>
            <person name="Mungall C.J."/>
            <person name="Nunoo J."/>
            <person name="Pacleb J.M."/>
            <person name="Paragas V."/>
            <person name="Park S."/>
            <person name="Patel S."/>
            <person name="Phouanenavong S."/>
            <person name="Wan K.H."/>
            <person name="Yu C."/>
            <person name="Lewis S.E."/>
            <person name="Rubin G.M."/>
            <person name="Celniker S.E."/>
        </authorList>
    </citation>
    <scope>NUCLEOTIDE SEQUENCE [LARGE SCALE MRNA]</scope>
    <source>
        <strain>Berkeley</strain>
        <tissue>Embryo</tissue>
    </source>
</reference>
<reference key="6">
    <citation type="journal article" date="1993" name="Development">
        <title>Puffs and PCR: the in vivo dynamics of early gene expression during ecdysone responses in Drosophila.</title>
        <authorList>
            <person name="Huet F."/>
            <person name="Ruiz C."/>
            <person name="Richards G."/>
        </authorList>
    </citation>
    <scope>DEVELOPMENTAL STAGE</scope>
</reference>
<dbReference type="EMBL" id="X15087">
    <property type="protein sequence ID" value="CAA33195.1"/>
    <property type="molecule type" value="Genomic_DNA"/>
</dbReference>
<dbReference type="EMBL" id="M37083">
    <property type="protein sequence ID" value="AAA28494.1"/>
    <property type="molecule type" value="mRNA"/>
</dbReference>
<dbReference type="EMBL" id="AE014296">
    <property type="protein sequence ID" value="AAF49324.1"/>
    <property type="molecule type" value="Genomic_DNA"/>
</dbReference>
<dbReference type="EMBL" id="AE014296">
    <property type="protein sequence ID" value="AAX52740.1"/>
    <property type="molecule type" value="Genomic_DNA"/>
</dbReference>
<dbReference type="EMBL" id="BT003745">
    <property type="protein sequence ID" value="AAO41406.1"/>
    <property type="molecule type" value="mRNA"/>
</dbReference>
<dbReference type="PIR" id="S04722">
    <property type="entry name" value="S04722"/>
</dbReference>
<dbReference type="RefSeq" id="NP_001014590.1">
    <molecule id="P11536-1"/>
    <property type="nucleotide sequence ID" value="NM_001014590.2"/>
</dbReference>
<dbReference type="RefSeq" id="NP_730288.1">
    <molecule id="P11536-1"/>
    <property type="nucleotide sequence ID" value="NM_168741.2"/>
</dbReference>
<dbReference type="SMR" id="P11536"/>
<dbReference type="BioGRID" id="65250">
    <property type="interactions" value="2"/>
</dbReference>
<dbReference type="FunCoup" id="P11536">
    <property type="interactions" value="309"/>
</dbReference>
<dbReference type="IntAct" id="P11536">
    <property type="interactions" value="2"/>
</dbReference>
<dbReference type="STRING" id="7227.FBpp0099825"/>
<dbReference type="GlyGen" id="P11536">
    <property type="glycosylation" value="2 sites"/>
</dbReference>
<dbReference type="PaxDb" id="7227-FBpp0099825"/>
<dbReference type="EnsemblMetazoa" id="FBtr0075204">
    <molecule id="P11536-1"/>
    <property type="protein sequence ID" value="FBpp0074967"/>
    <property type="gene ID" value="FBgn0000567"/>
</dbReference>
<dbReference type="EnsemblMetazoa" id="FBtr0100411">
    <molecule id="P11536-1"/>
    <property type="protein sequence ID" value="FBpp0099825"/>
    <property type="gene ID" value="FBgn0000567"/>
</dbReference>
<dbReference type="GeneID" id="39962"/>
<dbReference type="KEGG" id="dme:Dmel_CG32180"/>
<dbReference type="AGR" id="FB:FBgn0000567"/>
<dbReference type="CTD" id="39962"/>
<dbReference type="FlyBase" id="FBgn0000567">
    <property type="gene designation" value="Eip74EF"/>
</dbReference>
<dbReference type="VEuPathDB" id="VectorBase:FBgn0000567"/>
<dbReference type="eggNOG" id="KOG3804">
    <property type="taxonomic scope" value="Eukaryota"/>
</dbReference>
<dbReference type="GeneTree" id="ENSGT00940000169052"/>
<dbReference type="HOGENOM" id="CLU_014368_0_0_1"/>
<dbReference type="InParanoid" id="P11536"/>
<dbReference type="OMA" id="THCERAR"/>
<dbReference type="OrthoDB" id="8196042at2759"/>
<dbReference type="PhylomeDB" id="P11536"/>
<dbReference type="Reactome" id="R-DME-8939245">
    <property type="pathway name" value="RUNX1 regulates transcription of genes involved in BCR signaling"/>
</dbReference>
<dbReference type="Reactome" id="R-DME-8939247">
    <property type="pathway name" value="RUNX1 regulates transcription of genes involved in interleukin signaling"/>
</dbReference>
<dbReference type="SignaLink" id="P11536"/>
<dbReference type="BioGRID-ORCS" id="39962">
    <property type="hits" value="0 hits in 3 CRISPR screens"/>
</dbReference>
<dbReference type="ChiTaRS" id="Eip74EF">
    <property type="organism name" value="fly"/>
</dbReference>
<dbReference type="GenomeRNAi" id="39962"/>
<dbReference type="Proteomes" id="UP000000803">
    <property type="component" value="Chromosome 3L"/>
</dbReference>
<dbReference type="Bgee" id="FBgn0000567">
    <property type="expression patterns" value="Expressed in midgut large flat cell (Drosophila) in digestive tract and 247 other cell types or tissues"/>
</dbReference>
<dbReference type="ExpressionAtlas" id="P11536">
    <property type="expression patterns" value="baseline and differential"/>
</dbReference>
<dbReference type="GO" id="GO:0005634">
    <property type="term" value="C:nucleus"/>
    <property type="evidence" value="ECO:0000314"/>
    <property type="project" value="FlyBase"/>
</dbReference>
<dbReference type="GO" id="GO:0001228">
    <property type="term" value="F:DNA-binding transcription activator activity, RNA polymerase II-specific"/>
    <property type="evidence" value="ECO:0000314"/>
    <property type="project" value="FlyBase"/>
</dbReference>
<dbReference type="GO" id="GO:0000981">
    <property type="term" value="F:DNA-binding transcription factor activity, RNA polymerase II-specific"/>
    <property type="evidence" value="ECO:0000318"/>
    <property type="project" value="GO_Central"/>
</dbReference>
<dbReference type="GO" id="GO:0043565">
    <property type="term" value="F:sequence-specific DNA binding"/>
    <property type="evidence" value="ECO:0007669"/>
    <property type="project" value="InterPro"/>
</dbReference>
<dbReference type="GO" id="GO:0006914">
    <property type="term" value="P:autophagy"/>
    <property type="evidence" value="ECO:0000315"/>
    <property type="project" value="FlyBase"/>
</dbReference>
<dbReference type="GO" id="GO:0030154">
    <property type="term" value="P:cell differentiation"/>
    <property type="evidence" value="ECO:0000318"/>
    <property type="project" value="GO_Central"/>
</dbReference>
<dbReference type="GO" id="GO:0048477">
    <property type="term" value="P:oogenesis"/>
    <property type="evidence" value="ECO:0000303"/>
    <property type="project" value="FlyBase"/>
</dbReference>
<dbReference type="GO" id="GO:0045944">
    <property type="term" value="P:positive regulation of transcription by RNA polymerase II"/>
    <property type="evidence" value="ECO:0000315"/>
    <property type="project" value="FlyBase"/>
</dbReference>
<dbReference type="GO" id="GO:0040034">
    <property type="term" value="P:regulation of development, heterochronic"/>
    <property type="evidence" value="ECO:0000304"/>
    <property type="project" value="FlyBase"/>
</dbReference>
<dbReference type="GO" id="GO:0006357">
    <property type="term" value="P:regulation of transcription by RNA polymerase II"/>
    <property type="evidence" value="ECO:0000318"/>
    <property type="project" value="GO_Central"/>
</dbReference>
<dbReference type="GO" id="GO:0007283">
    <property type="term" value="P:spermatogenesis"/>
    <property type="evidence" value="ECO:0000315"/>
    <property type="project" value="FlyBase"/>
</dbReference>
<dbReference type="FunFam" id="1.10.10.10:FF:000411">
    <property type="entry name" value="Ecdysone-induced protein 74EF isoform A"/>
    <property type="match status" value="1"/>
</dbReference>
<dbReference type="Gene3D" id="1.10.10.10">
    <property type="entry name" value="Winged helix-like DNA-binding domain superfamily/Winged helix DNA-binding domain"/>
    <property type="match status" value="1"/>
</dbReference>
<dbReference type="InterPro" id="IPR000418">
    <property type="entry name" value="Ets_dom"/>
</dbReference>
<dbReference type="InterPro" id="IPR046328">
    <property type="entry name" value="ETS_fam"/>
</dbReference>
<dbReference type="InterPro" id="IPR036388">
    <property type="entry name" value="WH-like_DNA-bd_sf"/>
</dbReference>
<dbReference type="InterPro" id="IPR036390">
    <property type="entry name" value="WH_DNA-bd_sf"/>
</dbReference>
<dbReference type="PANTHER" id="PTHR11849:SF191">
    <property type="entry name" value="ECDYSONE-INDUCED PROTEIN 74EF ISOFORM B"/>
    <property type="match status" value="1"/>
</dbReference>
<dbReference type="PANTHER" id="PTHR11849">
    <property type="entry name" value="ETS"/>
    <property type="match status" value="1"/>
</dbReference>
<dbReference type="Pfam" id="PF00178">
    <property type="entry name" value="Ets"/>
    <property type="match status" value="1"/>
</dbReference>
<dbReference type="PRINTS" id="PR00454">
    <property type="entry name" value="ETSDOMAIN"/>
</dbReference>
<dbReference type="SMART" id="SM00413">
    <property type="entry name" value="ETS"/>
    <property type="match status" value="1"/>
</dbReference>
<dbReference type="SUPFAM" id="SSF46785">
    <property type="entry name" value="Winged helix' DNA-binding domain"/>
    <property type="match status" value="1"/>
</dbReference>
<dbReference type="PROSITE" id="PS00345">
    <property type="entry name" value="ETS_DOMAIN_1"/>
    <property type="match status" value="1"/>
</dbReference>
<dbReference type="PROSITE" id="PS00346">
    <property type="entry name" value="ETS_DOMAIN_2"/>
    <property type="match status" value="1"/>
</dbReference>
<dbReference type="PROSITE" id="PS50061">
    <property type="entry name" value="ETS_DOMAIN_3"/>
    <property type="match status" value="1"/>
</dbReference>
<protein>
    <recommendedName>
        <fullName>Ecdysone-induced protein 74EF isoform B</fullName>
    </recommendedName>
    <alternativeName>
        <fullName>ETS-related protein E74B</fullName>
    </alternativeName>
</protein>
<sequence>MIMVQHLVAASAHNFASQAAASLVNVSSSSSSSSSSSSSSLSLSSSSSSSSLSSATPTPVASPVTPTSPPPAAAAPAEASPPAGAELQEDGQQAKTQEDPTMKDQDMLEKTRQEVKDPVNVEEPGAIVDTESVMARQSPSPVASTKVPESLEEISNKSPPVQEDEEESESVASDCREFKVLYNHLRQQQHHHSPSSPDKTRSTLDDVSKILWERKQQLQRSSVITAAPTLQPQQHQQPMSDIEDEETLEDVDDADADVEADAEDEELLEQYQNGYDSPLDLSLGGATSAAASAAAAASAVSRRRGRTYSGTESDDSAQCERARMRLKPERKAERSAAYKKSLMKRYYTEIPIVKQSTSPAPQQQLQQQHHLQQQQQQQPHNGSTFAGATALLHIKTEQNTLLTPLQLQQQQQQQQGLHGAAGNGGSSNGNNAHQQQQPLAIPQRPLLHNLLSGGAIHNPHHRNYTTATTGSFPPSPADSGVSDVDSSSSGGQPCADELKARLGMPPATSASAAAAAAAAAAAAAHLHTGTFLHPNLYQNNAANSLRNIWNRSVGVPDNYYGSSGAGSGGTQPGGPGNPQTPGYLTTSYFNAPTAATAAASQRGTTINGYHSLHQQQQQQQQSQQSQQQQQLAHQQLSHQQQQALHQQLSHQQQQQQQQQQQHPHSQLNGPHPHSHPHSHPHSHPHAGQHTHSTIAAAAAAAAASVVSSSSSAVAAAAMLSASAAAAATAAAAAGGSQSVIQPATSSVSYDLSYMLELGGFQQRKAKKPRKPKLEMGVKRRSREGSTTYLWEFLLKLLQDREYCPRFIKWTNREKGVFKLVDSKAVSRLWGMHKNKPDMNYETMGRALRYYYQRGILAKVDGQRLVYQFVDVPKDIIEIDCNGV</sequence>
<proteinExistence type="evidence at transcript level"/>
<feature type="chain" id="PRO_0000204083" description="Ecdysone-induced protein 74EF isoform B">
    <location>
        <begin position="1"/>
        <end position="883"/>
    </location>
</feature>
<feature type="DNA-binding region" description="ETS" evidence="1">
    <location>
        <begin position="787"/>
        <end position="869"/>
    </location>
</feature>
<feature type="region of interest" description="Disordered" evidence="2">
    <location>
        <begin position="19"/>
        <end position="207"/>
    </location>
</feature>
<feature type="region of interest" description="Disordered" evidence="2">
    <location>
        <begin position="223"/>
        <end position="264"/>
    </location>
</feature>
<feature type="region of interest" description="Disordered" evidence="2">
    <location>
        <begin position="299"/>
        <end position="321"/>
    </location>
</feature>
<feature type="region of interest" description="Disordered" evidence="2">
    <location>
        <begin position="355"/>
        <end position="383"/>
    </location>
</feature>
<feature type="region of interest" description="Disordered" evidence="2">
    <location>
        <begin position="407"/>
        <end position="437"/>
    </location>
</feature>
<feature type="region of interest" description="Disordered" evidence="2">
    <location>
        <begin position="450"/>
        <end position="497"/>
    </location>
</feature>
<feature type="region of interest" description="Disordered" evidence="2">
    <location>
        <begin position="562"/>
        <end position="587"/>
    </location>
</feature>
<feature type="region of interest" description="Disordered" evidence="2">
    <location>
        <begin position="612"/>
        <end position="695"/>
    </location>
</feature>
<feature type="compositionally biased region" description="Low complexity" evidence="2">
    <location>
        <begin position="19"/>
        <end position="65"/>
    </location>
</feature>
<feature type="compositionally biased region" description="Low complexity" evidence="2">
    <location>
        <begin position="74"/>
        <end position="83"/>
    </location>
</feature>
<feature type="compositionally biased region" description="Basic and acidic residues" evidence="2">
    <location>
        <begin position="96"/>
        <end position="119"/>
    </location>
</feature>
<feature type="compositionally biased region" description="Basic and acidic residues" evidence="2">
    <location>
        <begin position="198"/>
        <end position="207"/>
    </location>
</feature>
<feature type="compositionally biased region" description="Polar residues" evidence="2">
    <location>
        <begin position="223"/>
        <end position="239"/>
    </location>
</feature>
<feature type="compositionally biased region" description="Acidic residues" evidence="2">
    <location>
        <begin position="241"/>
        <end position="264"/>
    </location>
</feature>
<feature type="compositionally biased region" description="Low complexity" evidence="2">
    <location>
        <begin position="362"/>
        <end position="378"/>
    </location>
</feature>
<feature type="compositionally biased region" description="Low complexity" evidence="2">
    <location>
        <begin position="407"/>
        <end position="418"/>
    </location>
</feature>
<feature type="compositionally biased region" description="Low complexity" evidence="2">
    <location>
        <begin position="428"/>
        <end position="437"/>
    </location>
</feature>
<feature type="compositionally biased region" description="Low complexity" evidence="2">
    <location>
        <begin position="477"/>
        <end position="491"/>
    </location>
</feature>
<feature type="compositionally biased region" description="Gly residues" evidence="2">
    <location>
        <begin position="563"/>
        <end position="576"/>
    </location>
</feature>
<feature type="compositionally biased region" description="Low complexity" evidence="2">
    <location>
        <begin position="612"/>
        <end position="671"/>
    </location>
</feature>
<feature type="compositionally biased region" description="Basic residues" evidence="2">
    <location>
        <begin position="672"/>
        <end position="688"/>
    </location>
</feature>
<feature type="sequence conflict" description="In Ref. 5; AAO41406." evidence="4" ref="5">
    <original>T</original>
    <variation>A</variation>
    <location>
        <position position="400"/>
    </location>
</feature>
<feature type="sequence conflict" description="In Ref. 1; CAA33195." evidence="4" ref="1">
    <original>Q</original>
    <variation>H</variation>
    <location>
        <position position="867"/>
    </location>
</feature>
<accession>P11536</accession>
<accession>A4V233</accession>
<accession>Q86NS8</accession>
<accession>Q9VVI7</accession>
<name>E74EB_DROME</name>
<evidence type="ECO:0000255" key="1">
    <source>
        <dbReference type="PROSITE-ProRule" id="PRU00237"/>
    </source>
</evidence>
<evidence type="ECO:0000256" key="2">
    <source>
        <dbReference type="SAM" id="MobiDB-lite"/>
    </source>
</evidence>
<evidence type="ECO:0000269" key="3">
    <source>
    </source>
</evidence>
<evidence type="ECO:0000305" key="4"/>
<organism>
    <name type="scientific">Drosophila melanogaster</name>
    <name type="common">Fruit fly</name>
    <dbReference type="NCBI Taxonomy" id="7227"/>
    <lineage>
        <taxon>Eukaryota</taxon>
        <taxon>Metazoa</taxon>
        <taxon>Ecdysozoa</taxon>
        <taxon>Arthropoda</taxon>
        <taxon>Hexapoda</taxon>
        <taxon>Insecta</taxon>
        <taxon>Pterygota</taxon>
        <taxon>Neoptera</taxon>
        <taxon>Endopterygota</taxon>
        <taxon>Diptera</taxon>
        <taxon>Brachycera</taxon>
        <taxon>Muscomorpha</taxon>
        <taxon>Ephydroidea</taxon>
        <taxon>Drosophilidae</taxon>
        <taxon>Drosophila</taxon>
        <taxon>Sophophora</taxon>
    </lineage>
</organism>
<comment type="subcellular location">
    <subcellularLocation>
        <location>Nucleus</location>
    </subcellularLocation>
</comment>
<comment type="alternative products">
    <event type="alternative splicing"/>
    <isoform>
        <id>P11536-1</id>
        <name>B</name>
        <name>D</name>
        <name>E74B</name>
        <sequence type="displayed"/>
    </isoform>
    <isoform>
        <id>P20105-1</id>
        <name>A</name>
        <name>E74A</name>
        <sequence type="external"/>
    </isoform>
</comment>
<comment type="developmental stage">
    <text evidence="3">In mid instar larvae salivary glands levels increase during 86-94 hours of development and represent the predominant isoform during puff stage 1. Levels remain relatively constant in late larvae until the premetamorphic pulse of ecdysone. Transcripts are detected again from puff stages 12-14 and 17-21.</text>
</comment>
<comment type="induction">
    <text>The expression of this protein is developmentally regulated and is correlated with the 20-OH-ecdysone induced activity of puff 74EF.</text>
</comment>
<comment type="similarity">
    <text evidence="4">Belongs to the ETS family.</text>
</comment>
<gene>
    <name type="primary">Eip74EF</name>
    <name type="synonym">E74</name>
    <name type="ORF">CG32180</name>
</gene>
<keyword id="KW-0025">Alternative splicing</keyword>
<keyword id="KW-0217">Developmental protein</keyword>
<keyword id="KW-0238">DNA-binding</keyword>
<keyword id="KW-0539">Nucleus</keyword>
<keyword id="KW-1185">Reference proteome</keyword>
<keyword id="KW-0804">Transcription</keyword>
<keyword id="KW-0805">Transcription regulation</keyword>